<geneLocation type="plasmid">
    <name>pLeu</name>
    <name>pBAp1</name>
</geneLocation>
<protein>
    <recommendedName>
        <fullName evidence="1">3-isopropylmalate dehydratase large subunit</fullName>
        <ecNumber evidence="1">4.2.1.33</ecNumber>
    </recommendedName>
    <alternativeName>
        <fullName evidence="1">Alpha-IPM isomerase</fullName>
        <shortName evidence="1">IPMI</shortName>
    </alternativeName>
    <alternativeName>
        <fullName evidence="1">Isopropylmalate isomerase</fullName>
    </alternativeName>
</protein>
<organism>
    <name type="scientific">Buchnera aphidicola subsp. Uroleucon sonchi</name>
    <dbReference type="NCBI Taxonomy" id="118118"/>
    <lineage>
        <taxon>Bacteria</taxon>
        <taxon>Pseudomonadati</taxon>
        <taxon>Pseudomonadota</taxon>
        <taxon>Gammaproteobacteria</taxon>
        <taxon>Enterobacterales</taxon>
        <taxon>Erwiniaceae</taxon>
        <taxon>Buchnera</taxon>
    </lineage>
</organism>
<comment type="function">
    <text evidence="1">Catalyzes the isomerization between 2-isopropylmalate and 3-isopropylmalate, via the formation of 2-isopropylmaleate.</text>
</comment>
<comment type="catalytic activity">
    <reaction evidence="1">
        <text>(2R,3S)-3-isopropylmalate = (2S)-2-isopropylmalate</text>
        <dbReference type="Rhea" id="RHEA:32287"/>
        <dbReference type="ChEBI" id="CHEBI:1178"/>
        <dbReference type="ChEBI" id="CHEBI:35121"/>
        <dbReference type="EC" id="4.2.1.33"/>
    </reaction>
</comment>
<comment type="cofactor">
    <cofactor evidence="1">
        <name>[4Fe-4S] cluster</name>
        <dbReference type="ChEBI" id="CHEBI:49883"/>
    </cofactor>
    <text evidence="1">Binds 1 [4Fe-4S] cluster per subunit.</text>
</comment>
<comment type="pathway">
    <text evidence="1">Amino-acid biosynthesis; L-leucine biosynthesis; L-leucine from 3-methyl-2-oxobutanoate: step 2/4.</text>
</comment>
<comment type="subunit">
    <text evidence="1">Heterodimer of LeuC and LeuD.</text>
</comment>
<comment type="similarity">
    <text evidence="1">Belongs to the aconitase/IPM isomerase family. LeuC type 1 subfamily.</text>
</comment>
<feature type="chain" id="PRO_0000076731" description="3-isopropylmalate dehydratase large subunit">
    <location>
        <begin position="1"/>
        <end position="443" status="greater than"/>
    </location>
</feature>
<feature type="binding site" evidence="1">
    <location>
        <position position="347"/>
    </location>
    <ligand>
        <name>[4Fe-4S] cluster</name>
        <dbReference type="ChEBI" id="CHEBI:49883"/>
    </ligand>
</feature>
<feature type="binding site" evidence="1">
    <location>
        <position position="407"/>
    </location>
    <ligand>
        <name>[4Fe-4S] cluster</name>
        <dbReference type="ChEBI" id="CHEBI:49883"/>
    </ligand>
</feature>
<feature type="binding site" evidence="1">
    <location>
        <position position="410"/>
    </location>
    <ligand>
        <name>[4Fe-4S] cluster</name>
        <dbReference type="ChEBI" id="CHEBI:49883"/>
    </ligand>
</feature>
<feature type="non-terminal residue">
    <location>
        <position position="443"/>
    </location>
</feature>
<sequence>MSKTLYQKIYDSHVVYEDKNSTSILYIDLHLLHEVTSPQAFDSLRNKQRTVRQSKKTFATMDHNVSTKIQNISASGSMAQKQMEQLIQNCQEFNIPLYDINNPHQGIVHVIAPEKGMTLPGMTIVCGDSHTSTHGAFGALAFGIGTSEVEHVLATQTLKQKRFKNMKIEIIGKIPRFVTAKDIILFIIGKLGSSSGTGHVIEFCGDVIRNMSMEERMTICNMAIEMGAKSGLIAPDEITYSYLKNKIYSPSGLFWQKSLDYWKLLKSDHNAHYDKCFTVNISNLAPQITWGTNLDQVISIDEKIPDFNDVNSTIKKDSAKSACEYMGLKSNTYLTNISIDKVFIGSCTNARIEDLRSAAGILKNKKIAKHVQAIVVPGSGSVKRQAEREGLDKIFIDSGFEWRLPGCSMCLGMNKDRLNFGERCASXSNRNFEGRQGRGGRTH</sequence>
<proteinExistence type="inferred from homology"/>
<dbReference type="EC" id="4.2.1.33" evidence="1"/>
<dbReference type="EMBL" id="AF197448">
    <property type="protein sequence ID" value="AAG31379.1"/>
    <property type="molecule type" value="Genomic_DNA"/>
</dbReference>
<dbReference type="UniPathway" id="UPA00048">
    <property type="reaction ID" value="UER00071"/>
</dbReference>
<dbReference type="GO" id="GO:0003861">
    <property type="term" value="F:3-isopropylmalate dehydratase activity"/>
    <property type="evidence" value="ECO:0007669"/>
    <property type="project" value="UniProtKB-EC"/>
</dbReference>
<dbReference type="GO" id="GO:0051539">
    <property type="term" value="F:4 iron, 4 sulfur cluster binding"/>
    <property type="evidence" value="ECO:0007669"/>
    <property type="project" value="UniProtKB-KW"/>
</dbReference>
<dbReference type="GO" id="GO:0046872">
    <property type="term" value="F:metal ion binding"/>
    <property type="evidence" value="ECO:0007669"/>
    <property type="project" value="UniProtKB-KW"/>
</dbReference>
<dbReference type="GO" id="GO:0009098">
    <property type="term" value="P:L-leucine biosynthetic process"/>
    <property type="evidence" value="ECO:0007669"/>
    <property type="project" value="UniProtKB-UniPathway"/>
</dbReference>
<dbReference type="CDD" id="cd01583">
    <property type="entry name" value="IPMI"/>
    <property type="match status" value="1"/>
</dbReference>
<dbReference type="Gene3D" id="3.30.499.10">
    <property type="entry name" value="Aconitase, domain 3"/>
    <property type="match status" value="2"/>
</dbReference>
<dbReference type="HAMAP" id="MF_01026">
    <property type="entry name" value="LeuC_type1"/>
    <property type="match status" value="1"/>
</dbReference>
<dbReference type="InterPro" id="IPR004430">
    <property type="entry name" value="3-IsopropMal_deHydase_lsu"/>
</dbReference>
<dbReference type="InterPro" id="IPR015931">
    <property type="entry name" value="Acnase/IPM_dHydase_lsu_aba_1/3"/>
</dbReference>
<dbReference type="InterPro" id="IPR001030">
    <property type="entry name" value="Acoase/IPM_deHydtase_lsu_aba"/>
</dbReference>
<dbReference type="InterPro" id="IPR018136">
    <property type="entry name" value="Aconitase_4Fe-4S_BS"/>
</dbReference>
<dbReference type="InterPro" id="IPR036008">
    <property type="entry name" value="Aconitase_4Fe-4S_dom"/>
</dbReference>
<dbReference type="InterPro" id="IPR050067">
    <property type="entry name" value="IPM_dehydratase_rel_enz"/>
</dbReference>
<dbReference type="InterPro" id="IPR033941">
    <property type="entry name" value="IPMI_cat"/>
</dbReference>
<dbReference type="NCBIfam" id="TIGR00170">
    <property type="entry name" value="leuC"/>
    <property type="match status" value="1"/>
</dbReference>
<dbReference type="NCBIfam" id="NF004016">
    <property type="entry name" value="PRK05478.1"/>
    <property type="match status" value="1"/>
</dbReference>
<dbReference type="NCBIfam" id="NF009116">
    <property type="entry name" value="PRK12466.1"/>
    <property type="match status" value="1"/>
</dbReference>
<dbReference type="PANTHER" id="PTHR43822:SF9">
    <property type="entry name" value="3-ISOPROPYLMALATE DEHYDRATASE"/>
    <property type="match status" value="1"/>
</dbReference>
<dbReference type="PANTHER" id="PTHR43822">
    <property type="entry name" value="HOMOACONITASE, MITOCHONDRIAL-RELATED"/>
    <property type="match status" value="1"/>
</dbReference>
<dbReference type="Pfam" id="PF00330">
    <property type="entry name" value="Aconitase"/>
    <property type="match status" value="1"/>
</dbReference>
<dbReference type="PRINTS" id="PR00415">
    <property type="entry name" value="ACONITASE"/>
</dbReference>
<dbReference type="SUPFAM" id="SSF53732">
    <property type="entry name" value="Aconitase iron-sulfur domain"/>
    <property type="match status" value="1"/>
</dbReference>
<dbReference type="PROSITE" id="PS00450">
    <property type="entry name" value="ACONITASE_1"/>
    <property type="match status" value="1"/>
</dbReference>
<dbReference type="PROSITE" id="PS01244">
    <property type="entry name" value="ACONITASE_2"/>
    <property type="match status" value="1"/>
</dbReference>
<evidence type="ECO:0000255" key="1">
    <source>
        <dbReference type="HAMAP-Rule" id="MF_01026"/>
    </source>
</evidence>
<reference key="1">
    <citation type="journal article" date="2001" name="J. Bacteriol.">
        <title>Vertical transmission of biosynthetic plasmids in aphid endosymbionts (Buchnera).</title>
        <authorList>
            <person name="Wernegreen J.J."/>
            <person name="Moran N.A."/>
        </authorList>
    </citation>
    <scope>NUCLEOTIDE SEQUENCE [GENOMIC DNA]</scope>
</reference>
<accession>Q9EVI6</accession>
<keyword id="KW-0004">4Fe-4S</keyword>
<keyword id="KW-0028">Amino-acid biosynthesis</keyword>
<keyword id="KW-0100">Branched-chain amino acid biosynthesis</keyword>
<keyword id="KW-0408">Iron</keyword>
<keyword id="KW-0411">Iron-sulfur</keyword>
<keyword id="KW-0432">Leucine biosynthesis</keyword>
<keyword id="KW-0456">Lyase</keyword>
<keyword id="KW-0479">Metal-binding</keyword>
<keyword id="KW-0614">Plasmid</keyword>
<name>LEUC_BUCUN</name>
<gene>
    <name evidence="1" type="primary">leuC</name>
</gene>